<name>HBD_HYLLA</name>
<accession>P61774</accession>
<accession>P02043</accession>
<sequence>MVHLTPEEKTAVNALWGKVNVDAVGGEALGRLLVVYPWTQRFFESFGDLSSPDAVMGNPKVKAHGKKVLGAFSDGLAHLDNLKGTFSQLSELHCDKLHVDPENFRLLGNVLVCVLARNFGKEFTPQVQAAYQKVVAGVANALAHKYH</sequence>
<protein>
    <recommendedName>
        <fullName>Hemoglobin subunit delta</fullName>
    </recommendedName>
    <alternativeName>
        <fullName>Delta-globin</fullName>
    </alternativeName>
    <alternativeName>
        <fullName>Hemoglobin delta chain</fullName>
    </alternativeName>
</protein>
<reference key="1">
    <citation type="journal article" date="1971" name="Biochem. Genet.">
        <title>Primate hemoglobins: some sequences and some proposals concerning the character of evolution and mutation.</title>
        <authorList>
            <person name="Boyer S.H."/>
            <person name="Crosby E.F."/>
            <person name="Noyes A.N."/>
            <person name="Fuller G.F."/>
            <person name="Leslie S.E."/>
            <person name="Donaldson L.J."/>
            <person name="Vrablik G.R."/>
            <person name="Schaefer E.W. Jr."/>
            <person name="Thurmon T.F."/>
        </authorList>
    </citation>
    <scope>PROTEIN SEQUENCE OF 2-147</scope>
</reference>
<evidence type="ECO:0000250" key="1">
    <source>
        <dbReference type="UniProtKB" id="P02042"/>
    </source>
</evidence>
<evidence type="ECO:0000255" key="2">
    <source>
        <dbReference type="PROSITE-ProRule" id="PRU00238"/>
    </source>
</evidence>
<evidence type="ECO:0000269" key="3">
    <source>
    </source>
</evidence>
<organism>
    <name type="scientific">Hylobates lar</name>
    <name type="common">Lar gibbon</name>
    <name type="synonym">White-handed gibbon</name>
    <dbReference type="NCBI Taxonomy" id="9580"/>
    <lineage>
        <taxon>Eukaryota</taxon>
        <taxon>Metazoa</taxon>
        <taxon>Chordata</taxon>
        <taxon>Craniata</taxon>
        <taxon>Vertebrata</taxon>
        <taxon>Euteleostomi</taxon>
        <taxon>Mammalia</taxon>
        <taxon>Eutheria</taxon>
        <taxon>Euarchontoglires</taxon>
        <taxon>Primates</taxon>
        <taxon>Haplorrhini</taxon>
        <taxon>Catarrhini</taxon>
        <taxon>Hylobatidae</taxon>
        <taxon>Hylobates</taxon>
    </lineage>
</organism>
<feature type="initiator methionine" description="Removed" evidence="3">
    <location>
        <position position="1"/>
    </location>
</feature>
<feature type="chain" id="PRO_0000053168" description="Hemoglobin subunit delta">
    <location>
        <begin position="2"/>
        <end position="147"/>
    </location>
</feature>
<feature type="domain" description="Globin" evidence="2">
    <location>
        <begin position="3"/>
        <end position="147"/>
    </location>
</feature>
<feature type="binding site" description="distal binding residue">
    <location>
        <position position="64"/>
    </location>
    <ligand>
        <name>heme b</name>
        <dbReference type="ChEBI" id="CHEBI:60344"/>
    </ligand>
    <ligandPart>
        <name>Fe</name>
        <dbReference type="ChEBI" id="CHEBI:18248"/>
    </ligandPart>
</feature>
<feature type="binding site" description="proximal binding residue">
    <location>
        <position position="93"/>
    </location>
    <ligand>
        <name>heme b</name>
        <dbReference type="ChEBI" id="CHEBI:60344"/>
    </ligand>
    <ligandPart>
        <name>Fe</name>
        <dbReference type="ChEBI" id="CHEBI:18248"/>
    </ligandPart>
</feature>
<feature type="modified residue" description="Phosphoserine" evidence="1">
    <location>
        <position position="51"/>
    </location>
</feature>
<feature type="sequence variant" description="Or in position 7, in a common allele.">
    <original>E</original>
    <variation>G</variation>
    <location>
        <position position="7"/>
    </location>
</feature>
<comment type="subunit">
    <text>Heterotetramer of two delta chains and two alpha chains.</text>
</comment>
<comment type="tissue specificity">
    <text>Red blood cells.</text>
</comment>
<comment type="similarity">
    <text evidence="2">Belongs to the globin family.</text>
</comment>
<dbReference type="SMR" id="P61774"/>
<dbReference type="GO" id="GO:0072562">
    <property type="term" value="C:blood microparticle"/>
    <property type="evidence" value="ECO:0007669"/>
    <property type="project" value="TreeGrafter"/>
</dbReference>
<dbReference type="GO" id="GO:0031838">
    <property type="term" value="C:haptoglobin-hemoglobin complex"/>
    <property type="evidence" value="ECO:0007669"/>
    <property type="project" value="TreeGrafter"/>
</dbReference>
<dbReference type="GO" id="GO:0005833">
    <property type="term" value="C:hemoglobin complex"/>
    <property type="evidence" value="ECO:0007669"/>
    <property type="project" value="InterPro"/>
</dbReference>
<dbReference type="GO" id="GO:0031720">
    <property type="term" value="F:haptoglobin binding"/>
    <property type="evidence" value="ECO:0007669"/>
    <property type="project" value="TreeGrafter"/>
</dbReference>
<dbReference type="GO" id="GO:0020037">
    <property type="term" value="F:heme binding"/>
    <property type="evidence" value="ECO:0007669"/>
    <property type="project" value="InterPro"/>
</dbReference>
<dbReference type="GO" id="GO:0031721">
    <property type="term" value="F:hemoglobin alpha binding"/>
    <property type="evidence" value="ECO:0007669"/>
    <property type="project" value="TreeGrafter"/>
</dbReference>
<dbReference type="GO" id="GO:0046872">
    <property type="term" value="F:metal ion binding"/>
    <property type="evidence" value="ECO:0007669"/>
    <property type="project" value="UniProtKB-KW"/>
</dbReference>
<dbReference type="GO" id="GO:0043177">
    <property type="term" value="F:organic acid binding"/>
    <property type="evidence" value="ECO:0007669"/>
    <property type="project" value="TreeGrafter"/>
</dbReference>
<dbReference type="GO" id="GO:0019825">
    <property type="term" value="F:oxygen binding"/>
    <property type="evidence" value="ECO:0007669"/>
    <property type="project" value="InterPro"/>
</dbReference>
<dbReference type="GO" id="GO:0005344">
    <property type="term" value="F:oxygen carrier activity"/>
    <property type="evidence" value="ECO:0007669"/>
    <property type="project" value="UniProtKB-KW"/>
</dbReference>
<dbReference type="GO" id="GO:0004601">
    <property type="term" value="F:peroxidase activity"/>
    <property type="evidence" value="ECO:0007669"/>
    <property type="project" value="TreeGrafter"/>
</dbReference>
<dbReference type="GO" id="GO:0042744">
    <property type="term" value="P:hydrogen peroxide catabolic process"/>
    <property type="evidence" value="ECO:0007669"/>
    <property type="project" value="TreeGrafter"/>
</dbReference>
<dbReference type="CDD" id="cd08925">
    <property type="entry name" value="Hb-beta-like"/>
    <property type="match status" value="1"/>
</dbReference>
<dbReference type="FunFam" id="1.10.490.10:FF:000001">
    <property type="entry name" value="Hemoglobin subunit beta"/>
    <property type="match status" value="1"/>
</dbReference>
<dbReference type="Gene3D" id="1.10.490.10">
    <property type="entry name" value="Globins"/>
    <property type="match status" value="1"/>
</dbReference>
<dbReference type="InterPro" id="IPR000971">
    <property type="entry name" value="Globin"/>
</dbReference>
<dbReference type="InterPro" id="IPR009050">
    <property type="entry name" value="Globin-like_sf"/>
</dbReference>
<dbReference type="InterPro" id="IPR012292">
    <property type="entry name" value="Globin/Proto"/>
</dbReference>
<dbReference type="InterPro" id="IPR002337">
    <property type="entry name" value="Hemoglobin_b"/>
</dbReference>
<dbReference type="InterPro" id="IPR050056">
    <property type="entry name" value="Hemoglobin_oxygen_transport"/>
</dbReference>
<dbReference type="PANTHER" id="PTHR11442">
    <property type="entry name" value="HEMOGLOBIN FAMILY MEMBER"/>
    <property type="match status" value="1"/>
</dbReference>
<dbReference type="PANTHER" id="PTHR11442:SF42">
    <property type="entry name" value="HEMOGLOBIN SUBUNIT BETA"/>
    <property type="match status" value="1"/>
</dbReference>
<dbReference type="Pfam" id="PF00042">
    <property type="entry name" value="Globin"/>
    <property type="match status" value="1"/>
</dbReference>
<dbReference type="PRINTS" id="PR00814">
    <property type="entry name" value="BETAHAEM"/>
</dbReference>
<dbReference type="SUPFAM" id="SSF46458">
    <property type="entry name" value="Globin-like"/>
    <property type="match status" value="1"/>
</dbReference>
<dbReference type="PROSITE" id="PS01033">
    <property type="entry name" value="GLOBIN"/>
    <property type="match status" value="1"/>
</dbReference>
<keyword id="KW-0903">Direct protein sequencing</keyword>
<keyword id="KW-0349">Heme</keyword>
<keyword id="KW-0408">Iron</keyword>
<keyword id="KW-0479">Metal-binding</keyword>
<keyword id="KW-0561">Oxygen transport</keyword>
<keyword id="KW-0597">Phosphoprotein</keyword>
<keyword id="KW-0813">Transport</keyword>
<proteinExistence type="evidence at protein level"/>
<gene>
    <name type="primary">HBD</name>
</gene>